<accession>A5KAL1</accession>
<comment type="function">
    <text evidence="1">Structure-specific nuclease with 5'-flap endonuclease and 5'-3' exonuclease activities involved in DNA replication and repair. During DNA replication, cleaves the 5'-overhanging flap structure that is generated by displacement synthesis when DNA polymerase encounters the 5'-end of a downstream Okazaki fragment. It enters the flap from the 5'-end and then tracks to cleave the flap base, leaving a nick for ligation. Also involved in the long patch base excision repair (LP-BER) pathway, by cleaving within the apurinic/apyrimidinic (AP) site-terminated flap. Acts as a genome stabilization factor that prevents flaps from equilibrating into structures that lead to duplications and deletions. Also possesses 5'-3' exonuclease activity on nicked or gapped double-stranded DNA, and exhibits RNase H activity. Also involved in replication and repair of rDNA and in repairing mitochondrial DNA.</text>
</comment>
<comment type="cofactor">
    <cofactor evidence="1">
        <name>Mg(2+)</name>
        <dbReference type="ChEBI" id="CHEBI:18420"/>
    </cofactor>
    <text evidence="1">Binds 2 magnesium ions per subunit. They probably participate in the reaction catalyzed by the enzyme. May bind an additional third magnesium ion after substrate binding.</text>
</comment>
<comment type="subunit">
    <text evidence="1">Interacts with PCNA. Three molecules of FEN1 bind to one PCNA trimer with each molecule binding to one PCNA monomer. PCNA stimulates the nuclease activity without altering cleavage specificity.</text>
</comment>
<comment type="subcellular location">
    <subcellularLocation>
        <location evidence="1">Nucleus</location>
        <location evidence="1">Nucleolus</location>
    </subcellularLocation>
    <subcellularLocation>
        <location evidence="1">Nucleus</location>
        <location evidence="1">Nucleoplasm</location>
    </subcellularLocation>
    <subcellularLocation>
        <location evidence="1">Mitochondrion</location>
    </subcellularLocation>
    <text evidence="1">Resides mostly in the nucleoli and relocalizes to the nucleoplasm upon DNA damage.</text>
</comment>
<comment type="PTM">
    <text evidence="1">Phosphorylated. Phosphorylation upon DNA damage induces relocalization to the nuclear plasma.</text>
</comment>
<comment type="similarity">
    <text evidence="1">Belongs to the XPG/RAD2 endonuclease family. FEN1 subfamily.</text>
</comment>
<protein>
    <recommendedName>
        <fullName evidence="1">Flap endonuclease 1</fullName>
        <shortName evidence="1">FEN-1</shortName>
        <ecNumber evidence="1">3.1.-.-</ecNumber>
    </recommendedName>
    <alternativeName>
        <fullName evidence="1">Flap structure-specific endonuclease 1</fullName>
    </alternativeName>
</protein>
<organism>
    <name type="scientific">Plasmodium vivax (strain Salvador I)</name>
    <dbReference type="NCBI Taxonomy" id="126793"/>
    <lineage>
        <taxon>Eukaryota</taxon>
        <taxon>Sar</taxon>
        <taxon>Alveolata</taxon>
        <taxon>Apicomplexa</taxon>
        <taxon>Aconoidasida</taxon>
        <taxon>Haemosporida</taxon>
        <taxon>Plasmodiidae</taxon>
        <taxon>Plasmodium</taxon>
        <taxon>Plasmodium (Plasmodium)</taxon>
    </lineage>
</organism>
<name>FEN1_PLAVS</name>
<sequence length="623" mass="69212">MGIKGLTKFIADAAPNAIKEIKIENLMGRVVAIDASMSLYQFIIAIRDSEQYGNLTNESGETTSHISGLMSRSIKLMENGLKPIYVFDGAPPELKGSELEKRGEKRQKAEELLKKAKEEGNLEEIKKQSGRTVRVTRKQNEEAKKLLTLMGIPVVEAPCEAESQCAFLTKYNLAHATATEDADALVFGTKILIRNLNANASSANQNKNKNSSKRGYILTEINLEQVLKGLNLSMNEFIDFCILCGCDYCDTIKGIGSKTAYNLIKEYNSIEKIIENIDKNKYQVPSNFRFVEARDSFINPKVLPKEEVKIDWCEPKIEELKNFLIKDYNFNEVRVTNYINRLLKARKVTTQRRLDNFFTACTKKSTKLVIEESQSQSKTQKEAKSKRKGKKRDAPNDGAAKLNSKQSKKTKVEKEPKREKKDEEAPNGEAHNGDNNEDEETPGMGARDPFDTDDEEDNPSPNFFHQKSDSESGNVKKEKTEQEGNATTAGDVYNYPNGKDTAGSNTHLSSNSTLHSCNNVGSEKAPNEGMHTVGSSAPEAGTNHVGINHVGTNHVGINHVGTNHVGTNHVGSGDLFPPNVADCANNNADKAQPEMKKKNMLFLLPYCPKNVTNVKKRKSVQRC</sequence>
<dbReference type="EC" id="3.1.-.-" evidence="1"/>
<dbReference type="EMBL" id="AAKM01000015">
    <property type="protein sequence ID" value="EDL43610.1"/>
    <property type="molecule type" value="Genomic_DNA"/>
</dbReference>
<dbReference type="RefSeq" id="XP_001613337.1">
    <property type="nucleotide sequence ID" value="XM_001613287.1"/>
</dbReference>
<dbReference type="SMR" id="A5KAL1"/>
<dbReference type="FunCoup" id="A5KAL1">
    <property type="interactions" value="591"/>
</dbReference>
<dbReference type="STRING" id="126793.A5KAL1"/>
<dbReference type="EnsemblProtists" id="EDL43610">
    <property type="protein sequence ID" value="EDL43610"/>
    <property type="gene ID" value="PVX_000820"/>
</dbReference>
<dbReference type="GeneID" id="5472594"/>
<dbReference type="KEGG" id="pvx:PVX_000855"/>
<dbReference type="VEuPathDB" id="PlasmoDB:PVX_000820"/>
<dbReference type="InParanoid" id="A5KAL1"/>
<dbReference type="OMA" id="NFFHHKS"/>
<dbReference type="PhylomeDB" id="A5KAL1"/>
<dbReference type="Proteomes" id="UP000008333">
    <property type="component" value="Chromosome 3"/>
</dbReference>
<dbReference type="GO" id="GO:0005739">
    <property type="term" value="C:mitochondrion"/>
    <property type="evidence" value="ECO:0007669"/>
    <property type="project" value="UniProtKB-SubCell"/>
</dbReference>
<dbReference type="GO" id="GO:0005730">
    <property type="term" value="C:nucleolus"/>
    <property type="evidence" value="ECO:0007669"/>
    <property type="project" value="UniProtKB-SubCell"/>
</dbReference>
<dbReference type="GO" id="GO:0005654">
    <property type="term" value="C:nucleoplasm"/>
    <property type="evidence" value="ECO:0007669"/>
    <property type="project" value="UniProtKB-SubCell"/>
</dbReference>
<dbReference type="GO" id="GO:0008409">
    <property type="term" value="F:5'-3' exonuclease activity"/>
    <property type="evidence" value="ECO:0007669"/>
    <property type="project" value="UniProtKB-UniRule"/>
</dbReference>
<dbReference type="GO" id="GO:0017108">
    <property type="term" value="F:5'-flap endonuclease activity"/>
    <property type="evidence" value="ECO:0007669"/>
    <property type="project" value="UniProtKB-UniRule"/>
</dbReference>
<dbReference type="GO" id="GO:0003677">
    <property type="term" value="F:DNA binding"/>
    <property type="evidence" value="ECO:0007669"/>
    <property type="project" value="UniProtKB-UniRule"/>
</dbReference>
<dbReference type="GO" id="GO:0000287">
    <property type="term" value="F:magnesium ion binding"/>
    <property type="evidence" value="ECO:0007669"/>
    <property type="project" value="UniProtKB-UniRule"/>
</dbReference>
<dbReference type="GO" id="GO:0006284">
    <property type="term" value="P:base-excision repair"/>
    <property type="evidence" value="ECO:0007669"/>
    <property type="project" value="UniProtKB-UniRule"/>
</dbReference>
<dbReference type="GO" id="GO:0043137">
    <property type="term" value="P:DNA replication, removal of RNA primer"/>
    <property type="evidence" value="ECO:0007669"/>
    <property type="project" value="UniProtKB-UniRule"/>
</dbReference>
<dbReference type="CDD" id="cd09907">
    <property type="entry name" value="H3TH_FEN1-Euk"/>
    <property type="match status" value="1"/>
</dbReference>
<dbReference type="CDD" id="cd09867">
    <property type="entry name" value="PIN_FEN1"/>
    <property type="match status" value="1"/>
</dbReference>
<dbReference type="FunFam" id="1.10.150.20:FF:000009">
    <property type="entry name" value="Flap endonuclease 1"/>
    <property type="match status" value="1"/>
</dbReference>
<dbReference type="FunFam" id="3.40.50.1010:FF:000016">
    <property type="entry name" value="Flap endonuclease 1"/>
    <property type="match status" value="1"/>
</dbReference>
<dbReference type="Gene3D" id="1.10.150.20">
    <property type="entry name" value="5' to 3' exonuclease, C-terminal subdomain"/>
    <property type="match status" value="1"/>
</dbReference>
<dbReference type="Gene3D" id="3.40.50.1010">
    <property type="entry name" value="5'-nuclease"/>
    <property type="match status" value="1"/>
</dbReference>
<dbReference type="HAMAP" id="MF_00614">
    <property type="entry name" value="Fen"/>
    <property type="match status" value="1"/>
</dbReference>
<dbReference type="InterPro" id="IPR002421">
    <property type="entry name" value="5-3_exonuclease"/>
</dbReference>
<dbReference type="InterPro" id="IPR036279">
    <property type="entry name" value="5-3_exonuclease_C_sf"/>
</dbReference>
<dbReference type="InterPro" id="IPR023426">
    <property type="entry name" value="Flap_endonuc"/>
</dbReference>
<dbReference type="InterPro" id="IPR008918">
    <property type="entry name" value="HhH2"/>
</dbReference>
<dbReference type="InterPro" id="IPR029060">
    <property type="entry name" value="PIN-like_dom_sf"/>
</dbReference>
<dbReference type="InterPro" id="IPR006086">
    <property type="entry name" value="XPG-I_dom"/>
</dbReference>
<dbReference type="InterPro" id="IPR006084">
    <property type="entry name" value="XPG/Rad2"/>
</dbReference>
<dbReference type="InterPro" id="IPR019974">
    <property type="entry name" value="XPG_CS"/>
</dbReference>
<dbReference type="InterPro" id="IPR006085">
    <property type="entry name" value="XPG_DNA_repair_N"/>
</dbReference>
<dbReference type="PANTHER" id="PTHR11081:SF9">
    <property type="entry name" value="FLAP ENDONUCLEASE 1"/>
    <property type="match status" value="1"/>
</dbReference>
<dbReference type="PANTHER" id="PTHR11081">
    <property type="entry name" value="FLAP ENDONUCLEASE FAMILY MEMBER"/>
    <property type="match status" value="1"/>
</dbReference>
<dbReference type="Pfam" id="PF00867">
    <property type="entry name" value="XPG_I"/>
    <property type="match status" value="1"/>
</dbReference>
<dbReference type="Pfam" id="PF00752">
    <property type="entry name" value="XPG_N"/>
    <property type="match status" value="1"/>
</dbReference>
<dbReference type="PRINTS" id="PR00853">
    <property type="entry name" value="XPGRADSUPER"/>
</dbReference>
<dbReference type="SMART" id="SM00475">
    <property type="entry name" value="53EXOc"/>
    <property type="match status" value="1"/>
</dbReference>
<dbReference type="SMART" id="SM00279">
    <property type="entry name" value="HhH2"/>
    <property type="match status" value="1"/>
</dbReference>
<dbReference type="SMART" id="SM00484">
    <property type="entry name" value="XPGI"/>
    <property type="match status" value="1"/>
</dbReference>
<dbReference type="SMART" id="SM00485">
    <property type="entry name" value="XPGN"/>
    <property type="match status" value="1"/>
</dbReference>
<dbReference type="SUPFAM" id="SSF47807">
    <property type="entry name" value="5' to 3' exonuclease, C-terminal subdomain"/>
    <property type="match status" value="1"/>
</dbReference>
<dbReference type="SUPFAM" id="SSF88723">
    <property type="entry name" value="PIN domain-like"/>
    <property type="match status" value="1"/>
</dbReference>
<dbReference type="PROSITE" id="PS00841">
    <property type="entry name" value="XPG_1"/>
    <property type="match status" value="1"/>
</dbReference>
<dbReference type="PROSITE" id="PS00842">
    <property type="entry name" value="XPG_2"/>
    <property type="match status" value="1"/>
</dbReference>
<evidence type="ECO:0000255" key="1">
    <source>
        <dbReference type="HAMAP-Rule" id="MF_03140"/>
    </source>
</evidence>
<evidence type="ECO:0000256" key="2">
    <source>
        <dbReference type="SAM" id="MobiDB-lite"/>
    </source>
</evidence>
<reference key="1">
    <citation type="journal article" date="2008" name="Nature">
        <title>Comparative genomics of the neglected human malaria parasite Plasmodium vivax.</title>
        <authorList>
            <person name="Carlton J.M."/>
            <person name="Adams J.H."/>
            <person name="Silva J.C."/>
            <person name="Bidwell S.L."/>
            <person name="Lorenzi H."/>
            <person name="Caler E."/>
            <person name="Crabtree J."/>
            <person name="Angiuoli S.V."/>
            <person name="Merino E.F."/>
            <person name="Amedeo P."/>
            <person name="Cheng Q."/>
            <person name="Coulson R.M.R."/>
            <person name="Crabb B.S."/>
            <person name="del Portillo H.A."/>
            <person name="Essien K."/>
            <person name="Feldblyum T.V."/>
            <person name="Fernandez-Becerra C."/>
            <person name="Gilson P.R."/>
            <person name="Gueye A.H."/>
            <person name="Guo X."/>
            <person name="Kang'a S."/>
            <person name="Kooij T.W.A."/>
            <person name="Korsinczky M."/>
            <person name="Meyer E.V.-S."/>
            <person name="Nene V."/>
            <person name="Paulsen I."/>
            <person name="White O."/>
            <person name="Ralph S.A."/>
            <person name="Ren Q."/>
            <person name="Sargeant T.J."/>
            <person name="Salzberg S.L."/>
            <person name="Stoeckert C.J."/>
            <person name="Sullivan S.A."/>
            <person name="Yamamoto M.M."/>
            <person name="Hoffman S.L."/>
            <person name="Wortman J.R."/>
            <person name="Gardner M.J."/>
            <person name="Galinski M.R."/>
            <person name="Barnwell J.W."/>
            <person name="Fraser-Liggett C.M."/>
        </authorList>
    </citation>
    <scope>NUCLEOTIDE SEQUENCE [LARGE SCALE GENOMIC DNA]</scope>
    <source>
        <strain>Salvador I</strain>
    </source>
</reference>
<feature type="chain" id="PRO_0000403541" description="Flap endonuclease 1">
    <location>
        <begin position="1"/>
        <end position="623"/>
    </location>
</feature>
<feature type="region of interest" description="N-domain">
    <location>
        <begin position="1"/>
        <end position="106"/>
    </location>
</feature>
<feature type="region of interest" description="I-domain">
    <location>
        <begin position="124"/>
        <end position="267"/>
    </location>
</feature>
<feature type="region of interest" description="Interaction with PCNA" evidence="1">
    <location>
        <begin position="350"/>
        <end position="358"/>
    </location>
</feature>
<feature type="region of interest" description="Disordered" evidence="2">
    <location>
        <begin position="368"/>
        <end position="517"/>
    </location>
</feature>
<feature type="compositionally biased region" description="Basic and acidic residues" evidence="2">
    <location>
        <begin position="410"/>
        <end position="424"/>
    </location>
</feature>
<feature type="compositionally biased region" description="Basic and acidic residues" evidence="2">
    <location>
        <begin position="466"/>
        <end position="482"/>
    </location>
</feature>
<feature type="compositionally biased region" description="Polar residues" evidence="2">
    <location>
        <begin position="502"/>
        <end position="517"/>
    </location>
</feature>
<feature type="binding site" evidence="1">
    <location>
        <position position="34"/>
    </location>
    <ligand>
        <name>Mg(2+)</name>
        <dbReference type="ChEBI" id="CHEBI:18420"/>
        <label>1</label>
    </ligand>
</feature>
<feature type="binding site" evidence="1">
    <location>
        <position position="47"/>
    </location>
    <ligand>
        <name>DNA</name>
        <dbReference type="ChEBI" id="CHEBI:16991"/>
    </ligand>
</feature>
<feature type="binding site" evidence="1">
    <location>
        <position position="72"/>
    </location>
    <ligand>
        <name>DNA</name>
        <dbReference type="ChEBI" id="CHEBI:16991"/>
    </ligand>
</feature>
<feature type="binding site" evidence="1">
    <location>
        <position position="88"/>
    </location>
    <ligand>
        <name>Mg(2+)</name>
        <dbReference type="ChEBI" id="CHEBI:18420"/>
        <label>1</label>
    </ligand>
</feature>
<feature type="binding site" evidence="1">
    <location>
        <position position="160"/>
    </location>
    <ligand>
        <name>DNA</name>
        <dbReference type="ChEBI" id="CHEBI:16991"/>
    </ligand>
</feature>
<feature type="binding site" evidence="1">
    <location>
        <position position="160"/>
    </location>
    <ligand>
        <name>Mg(2+)</name>
        <dbReference type="ChEBI" id="CHEBI:18420"/>
        <label>1</label>
    </ligand>
</feature>
<feature type="binding site" evidence="1">
    <location>
        <position position="162"/>
    </location>
    <ligand>
        <name>Mg(2+)</name>
        <dbReference type="ChEBI" id="CHEBI:18420"/>
        <label>1</label>
    </ligand>
</feature>
<feature type="binding site" evidence="1">
    <location>
        <position position="181"/>
    </location>
    <ligand>
        <name>Mg(2+)</name>
        <dbReference type="ChEBI" id="CHEBI:18420"/>
        <label>2</label>
    </ligand>
</feature>
<feature type="binding site" evidence="1">
    <location>
        <position position="183"/>
    </location>
    <ligand>
        <name>Mg(2+)</name>
        <dbReference type="ChEBI" id="CHEBI:18420"/>
        <label>2</label>
    </ligand>
</feature>
<feature type="binding site" evidence="1">
    <location>
        <position position="245"/>
    </location>
    <ligand>
        <name>DNA</name>
        <dbReference type="ChEBI" id="CHEBI:16991"/>
    </ligand>
</feature>
<feature type="binding site" evidence="1">
    <location>
        <position position="247"/>
    </location>
    <ligand>
        <name>DNA</name>
        <dbReference type="ChEBI" id="CHEBI:16991"/>
    </ligand>
</feature>
<feature type="binding site" evidence="1">
    <location>
        <position position="247"/>
    </location>
    <ligand>
        <name>Mg(2+)</name>
        <dbReference type="ChEBI" id="CHEBI:18420"/>
        <label>2</label>
    </ligand>
</feature>
<proteinExistence type="inferred from homology"/>
<keyword id="KW-0227">DNA damage</keyword>
<keyword id="KW-0234">DNA repair</keyword>
<keyword id="KW-0235">DNA replication</keyword>
<keyword id="KW-0255">Endonuclease</keyword>
<keyword id="KW-0269">Exonuclease</keyword>
<keyword id="KW-0378">Hydrolase</keyword>
<keyword id="KW-0460">Magnesium</keyword>
<keyword id="KW-0479">Metal-binding</keyword>
<keyword id="KW-0496">Mitochondrion</keyword>
<keyword id="KW-0540">Nuclease</keyword>
<keyword id="KW-0539">Nucleus</keyword>
<keyword id="KW-0597">Phosphoprotein</keyword>
<keyword id="KW-1185">Reference proteome</keyword>
<gene>
    <name evidence="1" type="primary">FEN1</name>
    <name type="ORF">PVX_000820</name>
</gene>